<accession>Q7NK78</accession>
<protein>
    <recommendedName>
        <fullName evidence="1">Large ribosomal subunit protein uL1</fullName>
    </recommendedName>
    <alternativeName>
        <fullName evidence="2">50S ribosomal protein L1</fullName>
    </alternativeName>
</protein>
<feature type="chain" id="PRO_0000125663" description="Large ribosomal subunit protein uL1">
    <location>
        <begin position="1"/>
        <end position="238"/>
    </location>
</feature>
<reference key="1">
    <citation type="journal article" date="2003" name="DNA Res.">
        <title>Complete genome structure of Gloeobacter violaceus PCC 7421, a cyanobacterium that lacks thylakoids.</title>
        <authorList>
            <person name="Nakamura Y."/>
            <person name="Kaneko T."/>
            <person name="Sato S."/>
            <person name="Mimuro M."/>
            <person name="Miyashita H."/>
            <person name="Tsuchiya T."/>
            <person name="Sasamoto S."/>
            <person name="Watanabe A."/>
            <person name="Kawashima K."/>
            <person name="Kishida Y."/>
            <person name="Kiyokawa C."/>
            <person name="Kohara M."/>
            <person name="Matsumoto M."/>
            <person name="Matsuno A."/>
            <person name="Nakazaki N."/>
            <person name="Shimpo S."/>
            <person name="Takeuchi C."/>
            <person name="Yamada M."/>
            <person name="Tabata S."/>
        </authorList>
    </citation>
    <scope>NUCLEOTIDE SEQUENCE [LARGE SCALE GENOMIC DNA]</scope>
    <source>
        <strain>ATCC 29082 / PCC 7421</strain>
    </source>
</reference>
<gene>
    <name evidence="1" type="primary">rplA</name>
    <name evidence="1" type="synonym">rpl1</name>
    <name type="ordered locus">glr1600</name>
</gene>
<organism>
    <name type="scientific">Gloeobacter violaceus (strain ATCC 29082 / PCC 7421)</name>
    <dbReference type="NCBI Taxonomy" id="251221"/>
    <lineage>
        <taxon>Bacteria</taxon>
        <taxon>Bacillati</taxon>
        <taxon>Cyanobacteriota</taxon>
        <taxon>Cyanophyceae</taxon>
        <taxon>Gloeobacterales</taxon>
        <taxon>Gloeobacteraceae</taxon>
        <taxon>Gloeobacter</taxon>
    </lineage>
</organism>
<comment type="function">
    <text evidence="1">Binds directly to 23S rRNA. The L1 stalk is quite mobile in the ribosome, and is involved in E site tRNA release.</text>
</comment>
<comment type="function">
    <text evidence="1">Protein L1 is also a translational repressor protein, it controls the translation of the L11 operon by binding to its mRNA.</text>
</comment>
<comment type="subunit">
    <text evidence="1">Part of the 50S ribosomal subunit.</text>
</comment>
<comment type="similarity">
    <text evidence="1">Belongs to the universal ribosomal protein uL1 family.</text>
</comment>
<dbReference type="EMBL" id="BA000045">
    <property type="protein sequence ID" value="BAC89541.1"/>
    <property type="molecule type" value="Genomic_DNA"/>
</dbReference>
<dbReference type="RefSeq" id="NP_924546.1">
    <property type="nucleotide sequence ID" value="NC_005125.1"/>
</dbReference>
<dbReference type="RefSeq" id="WP_011141599.1">
    <property type="nucleotide sequence ID" value="NC_005125.1"/>
</dbReference>
<dbReference type="SMR" id="Q7NK78"/>
<dbReference type="FunCoup" id="Q7NK78">
    <property type="interactions" value="319"/>
</dbReference>
<dbReference type="STRING" id="251221.gene:10759090"/>
<dbReference type="EnsemblBacteria" id="BAC89541">
    <property type="protein sequence ID" value="BAC89541"/>
    <property type="gene ID" value="BAC89541"/>
</dbReference>
<dbReference type="KEGG" id="gvi:glr1600"/>
<dbReference type="PATRIC" id="fig|251221.4.peg.1638"/>
<dbReference type="eggNOG" id="COG0081">
    <property type="taxonomic scope" value="Bacteria"/>
</dbReference>
<dbReference type="HOGENOM" id="CLU_062853_0_0_3"/>
<dbReference type="InParanoid" id="Q7NK78"/>
<dbReference type="OrthoDB" id="9803740at2"/>
<dbReference type="PhylomeDB" id="Q7NK78"/>
<dbReference type="Proteomes" id="UP000000557">
    <property type="component" value="Chromosome"/>
</dbReference>
<dbReference type="GO" id="GO:0015934">
    <property type="term" value="C:large ribosomal subunit"/>
    <property type="evidence" value="ECO:0007669"/>
    <property type="project" value="InterPro"/>
</dbReference>
<dbReference type="GO" id="GO:0019843">
    <property type="term" value="F:rRNA binding"/>
    <property type="evidence" value="ECO:0007669"/>
    <property type="project" value="UniProtKB-UniRule"/>
</dbReference>
<dbReference type="GO" id="GO:0003735">
    <property type="term" value="F:structural constituent of ribosome"/>
    <property type="evidence" value="ECO:0007669"/>
    <property type="project" value="InterPro"/>
</dbReference>
<dbReference type="GO" id="GO:0000049">
    <property type="term" value="F:tRNA binding"/>
    <property type="evidence" value="ECO:0007669"/>
    <property type="project" value="UniProtKB-KW"/>
</dbReference>
<dbReference type="GO" id="GO:0006417">
    <property type="term" value="P:regulation of translation"/>
    <property type="evidence" value="ECO:0007669"/>
    <property type="project" value="UniProtKB-KW"/>
</dbReference>
<dbReference type="GO" id="GO:0006412">
    <property type="term" value="P:translation"/>
    <property type="evidence" value="ECO:0007669"/>
    <property type="project" value="UniProtKB-UniRule"/>
</dbReference>
<dbReference type="CDD" id="cd00403">
    <property type="entry name" value="Ribosomal_L1"/>
    <property type="match status" value="1"/>
</dbReference>
<dbReference type="FunFam" id="3.40.50.790:FF:000001">
    <property type="entry name" value="50S ribosomal protein L1"/>
    <property type="match status" value="1"/>
</dbReference>
<dbReference type="Gene3D" id="3.30.190.20">
    <property type="match status" value="1"/>
</dbReference>
<dbReference type="Gene3D" id="3.40.50.790">
    <property type="match status" value="1"/>
</dbReference>
<dbReference type="HAMAP" id="MF_01318_B">
    <property type="entry name" value="Ribosomal_uL1_B"/>
    <property type="match status" value="1"/>
</dbReference>
<dbReference type="InterPro" id="IPR005878">
    <property type="entry name" value="Ribosom_uL1_bac-type"/>
</dbReference>
<dbReference type="InterPro" id="IPR002143">
    <property type="entry name" value="Ribosomal_uL1"/>
</dbReference>
<dbReference type="InterPro" id="IPR023674">
    <property type="entry name" value="Ribosomal_uL1-like"/>
</dbReference>
<dbReference type="InterPro" id="IPR028364">
    <property type="entry name" value="Ribosomal_uL1/biogenesis"/>
</dbReference>
<dbReference type="InterPro" id="IPR016095">
    <property type="entry name" value="Ribosomal_uL1_3-a/b-sand"/>
</dbReference>
<dbReference type="InterPro" id="IPR023673">
    <property type="entry name" value="Ribosomal_uL1_CS"/>
</dbReference>
<dbReference type="NCBIfam" id="TIGR01169">
    <property type="entry name" value="rplA_bact"/>
    <property type="match status" value="1"/>
</dbReference>
<dbReference type="PANTHER" id="PTHR36427">
    <property type="entry name" value="54S RIBOSOMAL PROTEIN L1, MITOCHONDRIAL"/>
    <property type="match status" value="1"/>
</dbReference>
<dbReference type="PANTHER" id="PTHR36427:SF3">
    <property type="entry name" value="LARGE RIBOSOMAL SUBUNIT PROTEIN UL1M"/>
    <property type="match status" value="1"/>
</dbReference>
<dbReference type="Pfam" id="PF00687">
    <property type="entry name" value="Ribosomal_L1"/>
    <property type="match status" value="1"/>
</dbReference>
<dbReference type="PIRSF" id="PIRSF002155">
    <property type="entry name" value="Ribosomal_L1"/>
    <property type="match status" value="1"/>
</dbReference>
<dbReference type="SUPFAM" id="SSF56808">
    <property type="entry name" value="Ribosomal protein L1"/>
    <property type="match status" value="1"/>
</dbReference>
<dbReference type="PROSITE" id="PS01199">
    <property type="entry name" value="RIBOSOMAL_L1"/>
    <property type="match status" value="1"/>
</dbReference>
<proteinExistence type="inferred from homology"/>
<evidence type="ECO:0000255" key="1">
    <source>
        <dbReference type="HAMAP-Rule" id="MF_01318"/>
    </source>
</evidence>
<evidence type="ECO:0000305" key="2"/>
<name>RL1_GLOVI</name>
<keyword id="KW-1185">Reference proteome</keyword>
<keyword id="KW-0678">Repressor</keyword>
<keyword id="KW-0687">Ribonucleoprotein</keyword>
<keyword id="KW-0689">Ribosomal protein</keyword>
<keyword id="KW-0694">RNA-binding</keyword>
<keyword id="KW-0699">rRNA-binding</keyword>
<keyword id="KW-0810">Translation regulation</keyword>
<keyword id="KW-0820">tRNA-binding</keyword>
<sequence length="238" mass="26131">MVQLSKRLKALREQVDRQTIYAPQKALELLKQTANAKFDETAETHIRLGINPKYADQQVRSTVVLPRGTGKAIRIAVLAKGEKVREAEKAGADIAGSEELIERIQGGFMEFDLMIATPDIMPQVARLGKLLGPRGLMPSPKGGTVTMDLVGAIREFKAGKLEFRADRTGIVHIPFGKVSFTPEALMDNLKSVQDAIDRAKPSGAKGRYWRTFHIKSTMGPSIEIDINALRDLKLEGAA</sequence>